<name>PTH_THET2</name>
<evidence type="ECO:0000255" key="1">
    <source>
        <dbReference type="HAMAP-Rule" id="MF_00083"/>
    </source>
</evidence>
<accession>Q72IA8</accession>
<gene>
    <name evidence="1" type="primary">pth</name>
    <name type="ordered locus">TT_C1224</name>
</gene>
<comment type="function">
    <text evidence="1">Hydrolyzes ribosome-free peptidyl-tRNAs (with 1 or more amino acids incorporated), which drop off the ribosome during protein synthesis, or as a result of ribosome stalling.</text>
</comment>
<comment type="function">
    <text evidence="1">Catalyzes the release of premature peptidyl moieties from peptidyl-tRNA molecules trapped in stalled 50S ribosomal subunits, and thus maintains levels of free tRNAs and 50S ribosomes.</text>
</comment>
<comment type="catalytic activity">
    <reaction evidence="1">
        <text>an N-acyl-L-alpha-aminoacyl-tRNA + H2O = an N-acyl-L-amino acid + a tRNA + H(+)</text>
        <dbReference type="Rhea" id="RHEA:54448"/>
        <dbReference type="Rhea" id="RHEA-COMP:10123"/>
        <dbReference type="Rhea" id="RHEA-COMP:13883"/>
        <dbReference type="ChEBI" id="CHEBI:15377"/>
        <dbReference type="ChEBI" id="CHEBI:15378"/>
        <dbReference type="ChEBI" id="CHEBI:59874"/>
        <dbReference type="ChEBI" id="CHEBI:78442"/>
        <dbReference type="ChEBI" id="CHEBI:138191"/>
        <dbReference type="EC" id="3.1.1.29"/>
    </reaction>
</comment>
<comment type="subunit">
    <text evidence="1">Monomer.</text>
</comment>
<comment type="subcellular location">
    <subcellularLocation>
        <location evidence="1">Cytoplasm</location>
    </subcellularLocation>
</comment>
<comment type="similarity">
    <text evidence="1">Belongs to the PTH family.</text>
</comment>
<keyword id="KW-0963">Cytoplasm</keyword>
<keyword id="KW-0378">Hydrolase</keyword>
<keyword id="KW-0694">RNA-binding</keyword>
<keyword id="KW-0820">tRNA-binding</keyword>
<organism>
    <name type="scientific">Thermus thermophilus (strain ATCC BAA-163 / DSM 7039 / HB27)</name>
    <dbReference type="NCBI Taxonomy" id="262724"/>
    <lineage>
        <taxon>Bacteria</taxon>
        <taxon>Thermotogati</taxon>
        <taxon>Deinococcota</taxon>
        <taxon>Deinococci</taxon>
        <taxon>Thermales</taxon>
        <taxon>Thermaceae</taxon>
        <taxon>Thermus</taxon>
    </lineage>
</organism>
<reference key="1">
    <citation type="journal article" date="2004" name="Nat. Biotechnol.">
        <title>The genome sequence of the extreme thermophile Thermus thermophilus.</title>
        <authorList>
            <person name="Henne A."/>
            <person name="Brueggemann H."/>
            <person name="Raasch C."/>
            <person name="Wiezer A."/>
            <person name="Hartsch T."/>
            <person name="Liesegang H."/>
            <person name="Johann A."/>
            <person name="Lienard T."/>
            <person name="Gohl O."/>
            <person name="Martinez-Arias R."/>
            <person name="Jacobi C."/>
            <person name="Starkuviene V."/>
            <person name="Schlenczeck S."/>
            <person name="Dencker S."/>
            <person name="Huber R."/>
            <person name="Klenk H.-P."/>
            <person name="Kramer W."/>
            <person name="Merkl R."/>
            <person name="Gottschalk G."/>
            <person name="Fritz H.-J."/>
        </authorList>
    </citation>
    <scope>NUCLEOTIDE SEQUENCE [LARGE SCALE GENOMIC DNA]</scope>
    <source>
        <strain>ATCC BAA-163 / DSM 7039 / HB27</strain>
    </source>
</reference>
<dbReference type="EC" id="3.1.1.29" evidence="1"/>
<dbReference type="EMBL" id="AE017221">
    <property type="protein sequence ID" value="AAS81566.1"/>
    <property type="molecule type" value="Genomic_DNA"/>
</dbReference>
<dbReference type="RefSeq" id="WP_011173630.1">
    <property type="nucleotide sequence ID" value="NC_005835.1"/>
</dbReference>
<dbReference type="SMR" id="Q72IA8"/>
<dbReference type="GeneID" id="3169381"/>
<dbReference type="KEGG" id="tth:TT_C1224"/>
<dbReference type="eggNOG" id="COG0193">
    <property type="taxonomic scope" value="Bacteria"/>
</dbReference>
<dbReference type="HOGENOM" id="CLU_062456_3_1_0"/>
<dbReference type="OrthoDB" id="9800507at2"/>
<dbReference type="Proteomes" id="UP000000592">
    <property type="component" value="Chromosome"/>
</dbReference>
<dbReference type="GO" id="GO:0005737">
    <property type="term" value="C:cytoplasm"/>
    <property type="evidence" value="ECO:0007669"/>
    <property type="project" value="UniProtKB-SubCell"/>
</dbReference>
<dbReference type="GO" id="GO:0004045">
    <property type="term" value="F:peptidyl-tRNA hydrolase activity"/>
    <property type="evidence" value="ECO:0007669"/>
    <property type="project" value="UniProtKB-UniRule"/>
</dbReference>
<dbReference type="GO" id="GO:0000049">
    <property type="term" value="F:tRNA binding"/>
    <property type="evidence" value="ECO:0007669"/>
    <property type="project" value="UniProtKB-UniRule"/>
</dbReference>
<dbReference type="GO" id="GO:0006515">
    <property type="term" value="P:protein quality control for misfolded or incompletely synthesized proteins"/>
    <property type="evidence" value="ECO:0007669"/>
    <property type="project" value="UniProtKB-UniRule"/>
</dbReference>
<dbReference type="GO" id="GO:0072344">
    <property type="term" value="P:rescue of stalled ribosome"/>
    <property type="evidence" value="ECO:0007669"/>
    <property type="project" value="UniProtKB-UniRule"/>
</dbReference>
<dbReference type="CDD" id="cd00462">
    <property type="entry name" value="PTH"/>
    <property type="match status" value="1"/>
</dbReference>
<dbReference type="Gene3D" id="3.40.50.1470">
    <property type="entry name" value="Peptidyl-tRNA hydrolase"/>
    <property type="match status" value="1"/>
</dbReference>
<dbReference type="HAMAP" id="MF_00083">
    <property type="entry name" value="Pept_tRNA_hydro_bact"/>
    <property type="match status" value="1"/>
</dbReference>
<dbReference type="InterPro" id="IPR001328">
    <property type="entry name" value="Pept_tRNA_hydro"/>
</dbReference>
<dbReference type="InterPro" id="IPR018171">
    <property type="entry name" value="Pept_tRNA_hydro_CS"/>
</dbReference>
<dbReference type="InterPro" id="IPR036416">
    <property type="entry name" value="Pept_tRNA_hydro_sf"/>
</dbReference>
<dbReference type="NCBIfam" id="TIGR00447">
    <property type="entry name" value="pth"/>
    <property type="match status" value="1"/>
</dbReference>
<dbReference type="PANTHER" id="PTHR17224">
    <property type="entry name" value="PEPTIDYL-TRNA HYDROLASE"/>
    <property type="match status" value="1"/>
</dbReference>
<dbReference type="PANTHER" id="PTHR17224:SF1">
    <property type="entry name" value="PEPTIDYL-TRNA HYDROLASE"/>
    <property type="match status" value="1"/>
</dbReference>
<dbReference type="Pfam" id="PF01195">
    <property type="entry name" value="Pept_tRNA_hydro"/>
    <property type="match status" value="1"/>
</dbReference>
<dbReference type="SUPFAM" id="SSF53178">
    <property type="entry name" value="Peptidyl-tRNA hydrolase-like"/>
    <property type="match status" value="1"/>
</dbReference>
<dbReference type="PROSITE" id="PS01195">
    <property type="entry name" value="PEPT_TRNA_HYDROL_1"/>
    <property type="match status" value="1"/>
</dbReference>
<protein>
    <recommendedName>
        <fullName evidence="1">Peptidyl-tRNA hydrolase</fullName>
        <shortName evidence="1">Pth</shortName>
        <ecNumber evidence="1">3.1.1.29</ecNumber>
    </recommendedName>
</protein>
<proteinExistence type="inferred from homology"/>
<sequence length="183" mass="20179">MFLVVGQGNPGERYARTRHNLGFMVLDRLGLSFRPRGEALVAEAEGGLFLKPLTYYNLTGRAVAPLARFYKIPPERILVVHDEMDLPLGRIRFKAGGSAAGNRGVLSIEEALGTRAFHRLRLGIGKPPDPSRGAEYVLSPFREEELPVVERVLEAAKEAVWCWVREGLPPCAGRFNGLDLSLG</sequence>
<feature type="chain" id="PRO_0000187842" description="Peptidyl-tRNA hydrolase">
    <location>
        <begin position="1"/>
        <end position="183"/>
    </location>
</feature>
<feature type="active site" description="Proton acceptor" evidence="1">
    <location>
        <position position="19"/>
    </location>
</feature>
<feature type="binding site" evidence="1">
    <location>
        <position position="14"/>
    </location>
    <ligand>
        <name>tRNA</name>
        <dbReference type="ChEBI" id="CHEBI:17843"/>
    </ligand>
</feature>
<feature type="binding site" evidence="1">
    <location>
        <position position="55"/>
    </location>
    <ligand>
        <name>tRNA</name>
        <dbReference type="ChEBI" id="CHEBI:17843"/>
    </ligand>
</feature>
<feature type="binding site" evidence="1">
    <location>
        <position position="57"/>
    </location>
    <ligand>
        <name>tRNA</name>
        <dbReference type="ChEBI" id="CHEBI:17843"/>
    </ligand>
</feature>
<feature type="site" description="Discriminates between blocked and unblocked aminoacyl-tRNA" evidence="1">
    <location>
        <position position="9"/>
    </location>
</feature>
<feature type="site" description="Stabilizes the basic form of H active site to accept a proton" evidence="1">
    <location>
        <position position="82"/>
    </location>
</feature>